<name>RL24_CLOB1</name>
<gene>
    <name evidence="1" type="primary">rplX</name>
    <name type="ordered locus">CLB_3526</name>
</gene>
<organism>
    <name type="scientific">Clostridium botulinum (strain ATCC 19397 / Type A)</name>
    <dbReference type="NCBI Taxonomy" id="441770"/>
    <lineage>
        <taxon>Bacteria</taxon>
        <taxon>Bacillati</taxon>
        <taxon>Bacillota</taxon>
        <taxon>Clostridia</taxon>
        <taxon>Eubacteriales</taxon>
        <taxon>Clostridiaceae</taxon>
        <taxon>Clostridium</taxon>
    </lineage>
</organism>
<dbReference type="EMBL" id="CP000726">
    <property type="protein sequence ID" value="ABS33618.1"/>
    <property type="molecule type" value="Genomic_DNA"/>
</dbReference>
<dbReference type="RefSeq" id="WP_003357467.1">
    <property type="nucleotide sequence ID" value="NC_009697.1"/>
</dbReference>
<dbReference type="SMR" id="A7FZ58"/>
<dbReference type="GeneID" id="5187724"/>
<dbReference type="KEGG" id="cba:CLB_3526"/>
<dbReference type="HOGENOM" id="CLU_093315_2_3_9"/>
<dbReference type="GO" id="GO:1990904">
    <property type="term" value="C:ribonucleoprotein complex"/>
    <property type="evidence" value="ECO:0007669"/>
    <property type="project" value="UniProtKB-KW"/>
</dbReference>
<dbReference type="GO" id="GO:0005840">
    <property type="term" value="C:ribosome"/>
    <property type="evidence" value="ECO:0007669"/>
    <property type="project" value="UniProtKB-KW"/>
</dbReference>
<dbReference type="GO" id="GO:0019843">
    <property type="term" value="F:rRNA binding"/>
    <property type="evidence" value="ECO:0007669"/>
    <property type="project" value="UniProtKB-UniRule"/>
</dbReference>
<dbReference type="GO" id="GO:0003735">
    <property type="term" value="F:structural constituent of ribosome"/>
    <property type="evidence" value="ECO:0007669"/>
    <property type="project" value="InterPro"/>
</dbReference>
<dbReference type="GO" id="GO:0006412">
    <property type="term" value="P:translation"/>
    <property type="evidence" value="ECO:0007669"/>
    <property type="project" value="UniProtKB-UniRule"/>
</dbReference>
<dbReference type="CDD" id="cd06089">
    <property type="entry name" value="KOW_RPL26"/>
    <property type="match status" value="1"/>
</dbReference>
<dbReference type="FunFam" id="2.30.30.30:FF:000004">
    <property type="entry name" value="50S ribosomal protein L24"/>
    <property type="match status" value="1"/>
</dbReference>
<dbReference type="Gene3D" id="2.30.30.30">
    <property type="match status" value="1"/>
</dbReference>
<dbReference type="HAMAP" id="MF_01326_B">
    <property type="entry name" value="Ribosomal_uL24_B"/>
    <property type="match status" value="1"/>
</dbReference>
<dbReference type="InterPro" id="IPR005824">
    <property type="entry name" value="KOW"/>
</dbReference>
<dbReference type="InterPro" id="IPR014722">
    <property type="entry name" value="Rib_uL2_dom2"/>
</dbReference>
<dbReference type="InterPro" id="IPR003256">
    <property type="entry name" value="Ribosomal_uL24"/>
</dbReference>
<dbReference type="InterPro" id="IPR041988">
    <property type="entry name" value="Ribosomal_uL24_KOW"/>
</dbReference>
<dbReference type="InterPro" id="IPR008991">
    <property type="entry name" value="Translation_prot_SH3-like_sf"/>
</dbReference>
<dbReference type="NCBIfam" id="TIGR01079">
    <property type="entry name" value="rplX_bact"/>
    <property type="match status" value="1"/>
</dbReference>
<dbReference type="PANTHER" id="PTHR12903">
    <property type="entry name" value="MITOCHONDRIAL RIBOSOMAL PROTEIN L24"/>
    <property type="match status" value="1"/>
</dbReference>
<dbReference type="Pfam" id="PF00467">
    <property type="entry name" value="KOW"/>
    <property type="match status" value="1"/>
</dbReference>
<dbReference type="Pfam" id="PF17136">
    <property type="entry name" value="ribosomal_L24"/>
    <property type="match status" value="1"/>
</dbReference>
<dbReference type="SMART" id="SM00739">
    <property type="entry name" value="KOW"/>
    <property type="match status" value="1"/>
</dbReference>
<dbReference type="SUPFAM" id="SSF50104">
    <property type="entry name" value="Translation proteins SH3-like domain"/>
    <property type="match status" value="1"/>
</dbReference>
<sequence>MSKIHVRKKDTVVVISGKDKSKIGEVLSVLPKKGKVIVKDVNVVTKHQKPNRENMQGGIIHKEAPIFSSKVMLYCDKCKSATRISNKILEDGTKVRVCKKCGETF</sequence>
<accession>A7FZ58</accession>
<feature type="chain" id="PRO_0000355658" description="Large ribosomal subunit protein uL24">
    <location>
        <begin position="1"/>
        <end position="105"/>
    </location>
</feature>
<reference key="1">
    <citation type="journal article" date="2007" name="PLoS ONE">
        <title>Analysis of the neurotoxin complex genes in Clostridium botulinum A1-A4 and B1 strains: BoNT/A3, /Ba4 and /B1 clusters are located within plasmids.</title>
        <authorList>
            <person name="Smith T.J."/>
            <person name="Hill K.K."/>
            <person name="Foley B.T."/>
            <person name="Detter J.C."/>
            <person name="Munk A.C."/>
            <person name="Bruce D.C."/>
            <person name="Doggett N.A."/>
            <person name="Smith L.A."/>
            <person name="Marks J.D."/>
            <person name="Xie G."/>
            <person name="Brettin T.S."/>
        </authorList>
    </citation>
    <scope>NUCLEOTIDE SEQUENCE [LARGE SCALE GENOMIC DNA]</scope>
    <source>
        <strain>ATCC 19397 / Type A</strain>
    </source>
</reference>
<evidence type="ECO:0000255" key="1">
    <source>
        <dbReference type="HAMAP-Rule" id="MF_01326"/>
    </source>
</evidence>
<evidence type="ECO:0000305" key="2"/>
<comment type="function">
    <text evidence="1">One of two assembly initiator proteins, it binds directly to the 5'-end of the 23S rRNA, where it nucleates assembly of the 50S subunit.</text>
</comment>
<comment type="function">
    <text evidence="1">One of the proteins that surrounds the polypeptide exit tunnel on the outside of the subunit.</text>
</comment>
<comment type="subunit">
    <text evidence="1">Part of the 50S ribosomal subunit.</text>
</comment>
<comment type="similarity">
    <text evidence="1">Belongs to the universal ribosomal protein uL24 family.</text>
</comment>
<keyword id="KW-0687">Ribonucleoprotein</keyword>
<keyword id="KW-0689">Ribosomal protein</keyword>
<keyword id="KW-0694">RNA-binding</keyword>
<keyword id="KW-0699">rRNA-binding</keyword>
<protein>
    <recommendedName>
        <fullName evidence="1">Large ribosomal subunit protein uL24</fullName>
    </recommendedName>
    <alternativeName>
        <fullName evidence="2">50S ribosomal protein L24</fullName>
    </alternativeName>
</protein>
<proteinExistence type="inferred from homology"/>